<protein>
    <recommendedName>
        <fullName>Proline-rich proteoglycan 2</fullName>
    </recommendedName>
    <alternativeName>
        <fullName>Acidic proline-rich protein PRP18</fullName>
    </alternativeName>
</protein>
<comment type="subcellular location">
    <subcellularLocation>
        <location evidence="3">Secreted</location>
    </subcellularLocation>
</comment>
<comment type="PTM">
    <text>Contains glycosaminoglycans of chondroitin-sulfate and heparan types.</text>
</comment>
<accession>P10165</accession>
<accession>Q07611</accession>
<evidence type="ECO:0000255" key="1"/>
<evidence type="ECO:0000256" key="2">
    <source>
        <dbReference type="SAM" id="MobiDB-lite"/>
    </source>
</evidence>
<evidence type="ECO:0000269" key="3">
    <source>
    </source>
</evidence>
<evidence type="ECO:0000305" key="4"/>
<gene>
    <name type="primary">Prpg2</name>
</gene>
<feature type="signal peptide" evidence="1">
    <location>
        <begin position="1"/>
        <end position="16"/>
    </location>
</feature>
<feature type="chain" id="PRO_0000022132" description="Proline-rich proteoglycan 2">
    <location>
        <begin position="17"/>
        <end position="295"/>
    </location>
</feature>
<feature type="region of interest" description="Disordered" evidence="2">
    <location>
        <begin position="16"/>
        <end position="295"/>
    </location>
</feature>
<feature type="compositionally biased region" description="Low complexity" evidence="2">
    <location>
        <begin position="26"/>
        <end position="41"/>
    </location>
</feature>
<feature type="compositionally biased region" description="Pro residues" evidence="2">
    <location>
        <begin position="48"/>
        <end position="58"/>
    </location>
</feature>
<feature type="compositionally biased region" description="Acidic residues" evidence="2">
    <location>
        <begin position="62"/>
        <end position="78"/>
    </location>
</feature>
<feature type="compositionally biased region" description="Pro residues" evidence="2">
    <location>
        <begin position="100"/>
        <end position="187"/>
    </location>
</feature>
<feature type="compositionally biased region" description="Pro residues" evidence="2">
    <location>
        <begin position="194"/>
        <end position="278"/>
    </location>
</feature>
<feature type="sequence conflict" description="In Ref. 2; AAA41956." evidence="4" ref="2">
    <original>Q</original>
    <variation>H</variation>
    <location>
        <position position="17"/>
    </location>
</feature>
<sequence>MLVVLLTAALLVLSSAQGVDEEVVYEDSSQQLELEQQSQGHGQHHPKPPPGGLPPRPPASDENGDGDDNDDGDDDGSGDDVNRPERPPQHGGNHHHPHHPPPAAGPQRPPQPGSPQGPPPPGGPQQRPPQGPPPQGGPQRPPQPGSPQGPPPPGGPQQRPPQGPPPQGGPQRPPQPGSPQGPPPPGGPQQRAPQGPPPQGGPQRPPQPGSPQGPPPPGGPQQRPPQGPPPQGGPQRPPQPGSPQGPPPPGGPQQRPPQGPPPQGGPQRPPQPGNPQGPPQQGGQQQSSFLWSFSA</sequence>
<reference key="1">
    <citation type="journal article" date="1993" name="J. Biol. Chem.">
        <title>Novel secretory proline-rich proteoglycans from rat parotid. Cloning and characterization by expression in AtT-20 cells.</title>
        <authorList>
            <person name="Castle A.M."/>
            <person name="Castle J.D."/>
        </authorList>
    </citation>
    <scope>NUCLEOTIDE SEQUENCE [MRNA]</scope>
    <scope>SUBCELLULAR LOCATION</scope>
    <scope>GLYCOSYLATION</scope>
    <source>
        <strain>Sprague-Dawley</strain>
        <tissue>Parotid gland</tissue>
    </source>
</reference>
<reference key="2">
    <citation type="journal article" date="1985" name="J. Biol. Chem.">
        <title>Novel multigene families encoding highly repetitive peptide sequences. Sequence analyses of rat and mouse proline-rich protein cDNAs.</title>
        <authorList>
            <person name="Clements S."/>
            <person name="Mehansho H."/>
            <person name="Carlson D.M."/>
        </authorList>
    </citation>
    <scope>NUCLEOTIDE SEQUENCE [MRNA] OF 1-23</scope>
    <source>
        <tissue>Parotid gland</tissue>
    </source>
</reference>
<organism>
    <name type="scientific">Rattus norvegicus</name>
    <name type="common">Rat</name>
    <dbReference type="NCBI Taxonomy" id="10116"/>
    <lineage>
        <taxon>Eukaryota</taxon>
        <taxon>Metazoa</taxon>
        <taxon>Chordata</taxon>
        <taxon>Craniata</taxon>
        <taxon>Vertebrata</taxon>
        <taxon>Euteleostomi</taxon>
        <taxon>Mammalia</taxon>
        <taxon>Eutheria</taxon>
        <taxon>Euarchontoglires</taxon>
        <taxon>Glires</taxon>
        <taxon>Rodentia</taxon>
        <taxon>Myomorpha</taxon>
        <taxon>Muroidea</taxon>
        <taxon>Muridae</taxon>
        <taxon>Murinae</taxon>
        <taxon>Rattus</taxon>
    </lineage>
</organism>
<dbReference type="EMBL" id="L17318">
    <property type="protein sequence ID" value="AAA03074.1"/>
    <property type="molecule type" value="mRNA"/>
</dbReference>
<dbReference type="EMBL" id="M11899">
    <property type="protein sequence ID" value="AAA41956.1"/>
    <property type="molecule type" value="mRNA"/>
</dbReference>
<dbReference type="PIR" id="B48013">
    <property type="entry name" value="B48013"/>
</dbReference>
<dbReference type="RefSeq" id="NP_742062.1">
    <property type="nucleotide sequence ID" value="NM_172065.2"/>
</dbReference>
<dbReference type="SMR" id="P10165"/>
<dbReference type="GeneID" id="257651"/>
<dbReference type="KEGG" id="rno:257651"/>
<dbReference type="UCSC" id="RGD:628797">
    <property type="organism name" value="rat"/>
</dbReference>
<dbReference type="AGR" id="RGD:628797"/>
<dbReference type="CTD" id="257651"/>
<dbReference type="RGD" id="628797">
    <property type="gene designation" value="Prpg2"/>
</dbReference>
<dbReference type="InParanoid" id="P10165"/>
<dbReference type="PRO" id="PR:P10165"/>
<dbReference type="Proteomes" id="UP000002494">
    <property type="component" value="Unplaced"/>
</dbReference>
<dbReference type="GO" id="GO:0005576">
    <property type="term" value="C:extracellular region"/>
    <property type="evidence" value="ECO:0007669"/>
    <property type="project" value="UniProtKB-SubCell"/>
</dbReference>
<dbReference type="InterPro" id="IPR026086">
    <property type="entry name" value="Pro-rich"/>
</dbReference>
<dbReference type="PANTHER" id="PTHR23203:SF20">
    <property type="entry name" value="BASIC SALIVARY PROLINE-RICH PROTEIN 1-RELATED"/>
    <property type="match status" value="1"/>
</dbReference>
<dbReference type="PANTHER" id="PTHR23203">
    <property type="entry name" value="PROLINE-RICH PROTEIN"/>
    <property type="match status" value="1"/>
</dbReference>
<dbReference type="Pfam" id="PF15240">
    <property type="entry name" value="Pro-rich"/>
    <property type="match status" value="1"/>
</dbReference>
<dbReference type="SMART" id="SM01412">
    <property type="entry name" value="Pro-rich"/>
    <property type="match status" value="1"/>
</dbReference>
<proteinExistence type="evidence at protein level"/>
<keyword id="KW-1185">Reference proteome</keyword>
<keyword id="KW-0677">Repeat</keyword>
<keyword id="KW-0964">Secreted</keyword>
<keyword id="KW-0732">Signal</keyword>
<name>PRPG2_RAT</name>